<organism evidence="9">
    <name type="scientific">Ixodes scapularis</name>
    <name type="common">Black-legged tick</name>
    <name type="synonym">Deer tick</name>
    <dbReference type="NCBI Taxonomy" id="6945"/>
    <lineage>
        <taxon>Eukaryota</taxon>
        <taxon>Metazoa</taxon>
        <taxon>Ecdysozoa</taxon>
        <taxon>Arthropoda</taxon>
        <taxon>Chelicerata</taxon>
        <taxon>Arachnida</taxon>
        <taxon>Acari</taxon>
        <taxon>Parasitiformes</taxon>
        <taxon>Ixodida</taxon>
        <taxon>Ixodoidea</taxon>
        <taxon>Ixodidae</taxon>
        <taxon>Ixodinae</taxon>
        <taxon>Ixodes</taxon>
    </lineage>
</organism>
<gene>
    <name evidence="9" type="primary">Salp9Pac</name>
</gene>
<reference evidence="9" key="1">
    <citation type="journal article" date="2002" name="Insect Mol. Biol.">
        <title>A novel family of anticoagulants from the saliva of Ixodes scapularis.</title>
        <authorList>
            <person name="Narasimhan S."/>
            <person name="Koski R.A."/>
            <person name="Beaulieu B."/>
            <person name="Anderson J.F."/>
            <person name="Ramamoorthi N."/>
            <person name="Kantor F."/>
            <person name="Cappello M."/>
            <person name="Fikrig E."/>
        </authorList>
    </citation>
    <scope>NUCLEOTIDE SEQUENCE [MRNA]</scope>
    <scope>PROTEIN SEQUENCE OF 22-37</scope>
    <scope>IDENTIFICATION BY MASS SPECTROMETRY</scope>
    <scope>TISSUE SPECIFICITY</scope>
    <scope>INDUCTION BY BLOOD FEEDING</scope>
    <source>
        <tissue evidence="9">Saliva</tissue>
    </source>
</reference>
<reference evidence="8" key="2">
    <citation type="journal article" date="2004" name="Proc. Natl. Acad. Sci. U.S.A.">
        <title>Disruption of Ixodes scapularis anticoagulation by using RNA interference.</title>
        <authorList>
            <person name="Narasimhan S."/>
            <person name="Montgomery R.R."/>
            <person name="DePonte K."/>
            <person name="Tschudi C."/>
            <person name="Marcantonio N."/>
            <person name="Anderson J.F."/>
            <person name="Sauer J.R."/>
            <person name="Cappello M."/>
            <person name="Kantor F.S."/>
            <person name="Fikrig E."/>
        </authorList>
    </citation>
    <scope>FUNCTION</scope>
    <scope>TISSUE SPECIFICITY</scope>
    <scope>DISRUPTION PHENOTYPE</scope>
</reference>
<reference evidence="8" key="3">
    <citation type="journal article" date="2006" name="Am. J. Trop. Med. Hyg.">
        <title>Disruption of the salivary protein 14 in Ixodes scapularis nymphs and impact on pathogen acquisition.</title>
        <authorList>
            <person name="Pedra J.H."/>
            <person name="Narasimhan S."/>
            <person name="Deponte K."/>
            <person name="Marcantonio N."/>
            <person name="Kantor F.S."/>
            <person name="Fikrig E."/>
        </authorList>
    </citation>
    <scope>DISRUPTION PHENOTYPE</scope>
</reference>
<reference evidence="8" key="4">
    <citation type="journal article" date="2021" name="J. Biol. Chem.">
        <title>Molecular basis of anticoagulant and anticomplement activity of the tick salivary protein Salp14 and its homologs.</title>
        <authorList>
            <person name="Denisov S.S."/>
            <person name="Ippel J.H."/>
            <person name="Castoldi E."/>
            <person name="Mans B.J."/>
            <person name="Hackeng T.M."/>
            <person name="Dijkgraaf I."/>
        </authorList>
    </citation>
    <scope>FUNCTION</scope>
</reference>
<proteinExistence type="evidence at protein level"/>
<dbReference type="EMBL" id="AF515779">
    <property type="protein sequence ID" value="AAN03859.1"/>
    <property type="molecule type" value="mRNA"/>
</dbReference>
<dbReference type="VEuPathDB" id="VectorBase:ISCI013958"/>
<dbReference type="VEuPathDB" id="VectorBase:ISCP_000041"/>
<dbReference type="VEuPathDB" id="VectorBase:ISCW013958"/>
<dbReference type="Proteomes" id="UP000001555">
    <property type="component" value="Unplaced"/>
</dbReference>
<dbReference type="GO" id="GO:0005576">
    <property type="term" value="C:extracellular region"/>
    <property type="evidence" value="ECO:0007669"/>
    <property type="project" value="UniProtKB-SubCell"/>
</dbReference>
<dbReference type="CDD" id="cd23501">
    <property type="entry name" value="TSLPI_Salp14_NTD"/>
    <property type="match status" value="1"/>
</dbReference>
<dbReference type="InterPro" id="IPR011694">
    <property type="entry name" value="Ixonnexin-like"/>
</dbReference>
<dbReference type="Pfam" id="PF07771">
    <property type="entry name" value="TSGP1"/>
    <property type="match status" value="1"/>
</dbReference>
<comment type="function">
    <text evidence="4 6">Salivary protein that facilitates blood feeding of adult ticks on vertebrate species (PubMed:14745044). Inhibits the lectin pathway of complement system activation in the host (PubMed:34118237).</text>
</comment>
<comment type="subcellular location">
    <subcellularLocation>
        <location evidence="8">Secreted</location>
    </subcellularLocation>
</comment>
<comment type="tissue specificity">
    <text evidence="3 4">Salivary gland (at protein level) (PubMed:14745044). Saliva (at protein level) (PubMed:12421422). Midgut (PubMed:12421422).</text>
</comment>
<comment type="induction">
    <text evidence="3">Up-regulated in salivary glands and midgut following blood feeding.</text>
</comment>
<comment type="disruption phenotype">
    <text evidence="4 5">RNAi-mediated knockdown results in impaired feeding of adult ticks, observed as decline in the engorgement weights (PubMed:14745044). No significant effects on the ability of nymphs to feed (PubMed:17038693).</text>
</comment>
<comment type="miscellaneous">
    <text evidence="3 6">Does not show anticoagulant activity in in vitro assays.</text>
</comment>
<comment type="similarity">
    <text evidence="8">Belongs to the salp14 family.</text>
</comment>
<sequence length="102" mass="11370">MGLTEIMLVLVSLAFVATAAAHDCQNGTRPASEEKREGCDYYCWNTETKSWDKFFFGNGERCFYNNGDEGLCQNGECHLTTDSGVPNDTDAKIEETEEELEA</sequence>
<accession>Q8MUP7</accession>
<name>SP9_IXOSC</name>
<keyword id="KW-0903">Direct protein sequencing</keyword>
<keyword id="KW-0325">Glycoprotein</keyword>
<keyword id="KW-1185">Reference proteome</keyword>
<keyword id="KW-0964">Secreted</keyword>
<keyword id="KW-0732">Signal</keyword>
<feature type="signal peptide" evidence="3">
    <location>
        <begin position="1"/>
        <end position="21"/>
    </location>
</feature>
<feature type="chain" id="PRO_0000460840" description="Salivary protein Salp9" evidence="8">
    <location>
        <begin position="22"/>
        <end position="102"/>
    </location>
</feature>
<feature type="region of interest" description="Disordered" evidence="2">
    <location>
        <begin position="83"/>
        <end position="102"/>
    </location>
</feature>
<feature type="glycosylation site" description="N-linked (GlcNAc...) asparagine" evidence="1">
    <location>
        <position position="26"/>
    </location>
</feature>
<feature type="glycosylation site" description="N-linked (GlcNAc...) asparagine" evidence="1">
    <location>
        <position position="87"/>
    </location>
</feature>
<evidence type="ECO:0000255" key="1">
    <source>
        <dbReference type="PROSITE-ProRule" id="PRU00498"/>
    </source>
</evidence>
<evidence type="ECO:0000256" key="2">
    <source>
        <dbReference type="SAM" id="MobiDB-lite"/>
    </source>
</evidence>
<evidence type="ECO:0000269" key="3">
    <source>
    </source>
</evidence>
<evidence type="ECO:0000269" key="4">
    <source>
    </source>
</evidence>
<evidence type="ECO:0000269" key="5">
    <source>
    </source>
</evidence>
<evidence type="ECO:0000269" key="6">
    <source>
    </source>
</evidence>
<evidence type="ECO:0000303" key="7">
    <source>
    </source>
</evidence>
<evidence type="ECO:0000305" key="8"/>
<evidence type="ECO:0000312" key="9">
    <source>
        <dbReference type="EMBL" id="AAN03859.1"/>
    </source>
</evidence>
<protein>
    <recommendedName>
        <fullName evidence="8">Salivary protein Salp9</fullName>
        <shortName evidence="7">Salp9</shortName>
    </recommendedName>
</protein>